<comment type="function">
    <text evidence="1">Catalyzes the transfer of the enolpyruvyl moiety of phosphoenolpyruvate (PEP) to the 5-hydroxyl of shikimate-3-phosphate (S3P) to produce enolpyruvyl shikimate-3-phosphate and inorganic phosphate.</text>
</comment>
<comment type="catalytic activity">
    <reaction evidence="1">
        <text>3-phosphoshikimate + phosphoenolpyruvate = 5-O-(1-carboxyvinyl)-3-phosphoshikimate + phosphate</text>
        <dbReference type="Rhea" id="RHEA:21256"/>
        <dbReference type="ChEBI" id="CHEBI:43474"/>
        <dbReference type="ChEBI" id="CHEBI:57701"/>
        <dbReference type="ChEBI" id="CHEBI:58702"/>
        <dbReference type="ChEBI" id="CHEBI:145989"/>
        <dbReference type="EC" id="2.5.1.19"/>
    </reaction>
    <physiologicalReaction direction="left-to-right" evidence="1">
        <dbReference type="Rhea" id="RHEA:21257"/>
    </physiologicalReaction>
</comment>
<comment type="pathway">
    <text evidence="1">Metabolic intermediate biosynthesis; chorismate biosynthesis; chorismate from D-erythrose 4-phosphate and phosphoenolpyruvate: step 6/7.</text>
</comment>
<comment type="subunit">
    <text evidence="1">Monomer.</text>
</comment>
<comment type="subcellular location">
    <subcellularLocation>
        <location evidence="1">Cytoplasm</location>
    </subcellularLocation>
</comment>
<comment type="similarity">
    <text evidence="1">Belongs to the EPSP synthase family.</text>
</comment>
<organism>
    <name type="scientific">Staphylococcus aureus (strain USA300 / TCH1516)</name>
    <dbReference type="NCBI Taxonomy" id="451516"/>
    <lineage>
        <taxon>Bacteria</taxon>
        <taxon>Bacillati</taxon>
        <taxon>Bacillota</taxon>
        <taxon>Bacilli</taxon>
        <taxon>Bacillales</taxon>
        <taxon>Staphylococcaceae</taxon>
        <taxon>Staphylococcus</taxon>
    </lineage>
</organism>
<gene>
    <name evidence="1" type="primary">aroA</name>
    <name type="ordered locus">USA300HOU_1402</name>
</gene>
<protein>
    <recommendedName>
        <fullName evidence="1">3-phosphoshikimate 1-carboxyvinyltransferase</fullName>
        <ecNumber evidence="1">2.5.1.19</ecNumber>
    </recommendedName>
    <alternativeName>
        <fullName evidence="1">5-enolpyruvylshikimate-3-phosphate synthase</fullName>
        <shortName evidence="1">EPSP synthase</shortName>
        <shortName evidence="1">EPSPS</shortName>
    </alternativeName>
</protein>
<feature type="chain" id="PRO_1000078003" description="3-phosphoshikimate 1-carboxyvinyltransferase">
    <location>
        <begin position="1"/>
        <end position="432"/>
    </location>
</feature>
<feature type="active site" description="Proton acceptor" evidence="1">
    <location>
        <position position="317"/>
    </location>
</feature>
<feature type="binding site" evidence="1">
    <location>
        <position position="23"/>
    </location>
    <ligand>
        <name>3-phosphoshikimate</name>
        <dbReference type="ChEBI" id="CHEBI:145989"/>
    </ligand>
</feature>
<feature type="binding site" evidence="1">
    <location>
        <position position="23"/>
    </location>
    <ligand>
        <name>phosphoenolpyruvate</name>
        <dbReference type="ChEBI" id="CHEBI:58702"/>
    </ligand>
</feature>
<feature type="binding site" evidence="1">
    <location>
        <position position="24"/>
    </location>
    <ligand>
        <name>3-phosphoshikimate</name>
        <dbReference type="ChEBI" id="CHEBI:145989"/>
    </ligand>
</feature>
<feature type="binding site" evidence="1">
    <location>
        <position position="28"/>
    </location>
    <ligand>
        <name>3-phosphoshikimate</name>
        <dbReference type="ChEBI" id="CHEBI:145989"/>
    </ligand>
</feature>
<feature type="binding site" evidence="1">
    <location>
        <position position="95"/>
    </location>
    <ligand>
        <name>phosphoenolpyruvate</name>
        <dbReference type="ChEBI" id="CHEBI:58702"/>
    </ligand>
</feature>
<feature type="binding site" evidence="1">
    <location>
        <position position="123"/>
    </location>
    <ligand>
        <name>phosphoenolpyruvate</name>
        <dbReference type="ChEBI" id="CHEBI:58702"/>
    </ligand>
</feature>
<feature type="binding site" evidence="1">
    <location>
        <position position="167"/>
    </location>
    <ligand>
        <name>3-phosphoshikimate</name>
        <dbReference type="ChEBI" id="CHEBI:145989"/>
    </ligand>
</feature>
<feature type="binding site" evidence="1">
    <location>
        <position position="169"/>
    </location>
    <ligand>
        <name>3-phosphoshikimate</name>
        <dbReference type="ChEBI" id="CHEBI:145989"/>
    </ligand>
</feature>
<feature type="binding site" evidence="1">
    <location>
        <position position="169"/>
    </location>
    <ligand>
        <name>phosphoenolpyruvate</name>
        <dbReference type="ChEBI" id="CHEBI:58702"/>
    </ligand>
</feature>
<feature type="binding site" evidence="1">
    <location>
        <position position="317"/>
    </location>
    <ligand>
        <name>3-phosphoshikimate</name>
        <dbReference type="ChEBI" id="CHEBI:145989"/>
    </ligand>
</feature>
<feature type="binding site" evidence="1">
    <location>
        <position position="344"/>
    </location>
    <ligand>
        <name>3-phosphoshikimate</name>
        <dbReference type="ChEBI" id="CHEBI:145989"/>
    </ligand>
</feature>
<feature type="binding site" evidence="1">
    <location>
        <position position="348"/>
    </location>
    <ligand>
        <name>phosphoenolpyruvate</name>
        <dbReference type="ChEBI" id="CHEBI:58702"/>
    </ligand>
</feature>
<feature type="binding site" evidence="1">
    <location>
        <position position="390"/>
    </location>
    <ligand>
        <name>phosphoenolpyruvate</name>
        <dbReference type="ChEBI" id="CHEBI:58702"/>
    </ligand>
</feature>
<dbReference type="EC" id="2.5.1.19" evidence="1"/>
<dbReference type="EMBL" id="CP000730">
    <property type="protein sequence ID" value="ABX29412.1"/>
    <property type="molecule type" value="Genomic_DNA"/>
</dbReference>
<dbReference type="RefSeq" id="WP_000245895.1">
    <property type="nucleotide sequence ID" value="NC_010079.1"/>
</dbReference>
<dbReference type="SMR" id="A8Z444"/>
<dbReference type="KEGG" id="sax:USA300HOU_1402"/>
<dbReference type="HOGENOM" id="CLU_024321_0_1_9"/>
<dbReference type="UniPathway" id="UPA00053">
    <property type="reaction ID" value="UER00089"/>
</dbReference>
<dbReference type="GO" id="GO:0005737">
    <property type="term" value="C:cytoplasm"/>
    <property type="evidence" value="ECO:0007669"/>
    <property type="project" value="UniProtKB-SubCell"/>
</dbReference>
<dbReference type="GO" id="GO:0003866">
    <property type="term" value="F:3-phosphoshikimate 1-carboxyvinyltransferase activity"/>
    <property type="evidence" value="ECO:0007669"/>
    <property type="project" value="UniProtKB-UniRule"/>
</dbReference>
<dbReference type="GO" id="GO:0008652">
    <property type="term" value="P:amino acid biosynthetic process"/>
    <property type="evidence" value="ECO:0007669"/>
    <property type="project" value="UniProtKB-KW"/>
</dbReference>
<dbReference type="GO" id="GO:0009073">
    <property type="term" value="P:aromatic amino acid family biosynthetic process"/>
    <property type="evidence" value="ECO:0007669"/>
    <property type="project" value="UniProtKB-KW"/>
</dbReference>
<dbReference type="GO" id="GO:0009423">
    <property type="term" value="P:chorismate biosynthetic process"/>
    <property type="evidence" value="ECO:0007669"/>
    <property type="project" value="UniProtKB-UniRule"/>
</dbReference>
<dbReference type="CDD" id="cd01556">
    <property type="entry name" value="EPSP_synthase"/>
    <property type="match status" value="1"/>
</dbReference>
<dbReference type="FunFam" id="3.65.10.10:FF:000005">
    <property type="entry name" value="3-phosphoshikimate 1-carboxyvinyltransferase"/>
    <property type="match status" value="1"/>
</dbReference>
<dbReference type="FunFam" id="3.65.10.10:FF:000006">
    <property type="entry name" value="3-phosphoshikimate 1-carboxyvinyltransferase"/>
    <property type="match status" value="1"/>
</dbReference>
<dbReference type="Gene3D" id="3.65.10.10">
    <property type="entry name" value="Enolpyruvate transferase domain"/>
    <property type="match status" value="2"/>
</dbReference>
<dbReference type="HAMAP" id="MF_00210">
    <property type="entry name" value="EPSP_synth"/>
    <property type="match status" value="1"/>
</dbReference>
<dbReference type="InterPro" id="IPR001986">
    <property type="entry name" value="Enolpyruvate_Tfrase_dom"/>
</dbReference>
<dbReference type="InterPro" id="IPR036968">
    <property type="entry name" value="Enolpyruvate_Tfrase_sf"/>
</dbReference>
<dbReference type="InterPro" id="IPR006264">
    <property type="entry name" value="EPSP_synthase"/>
</dbReference>
<dbReference type="InterPro" id="IPR023193">
    <property type="entry name" value="EPSP_synthase_CS"/>
</dbReference>
<dbReference type="InterPro" id="IPR013792">
    <property type="entry name" value="RNA3'P_cycl/enolpyr_Trfase_a/b"/>
</dbReference>
<dbReference type="NCBIfam" id="TIGR01356">
    <property type="entry name" value="aroA"/>
    <property type="match status" value="1"/>
</dbReference>
<dbReference type="PANTHER" id="PTHR21090">
    <property type="entry name" value="AROM/DEHYDROQUINATE SYNTHASE"/>
    <property type="match status" value="1"/>
</dbReference>
<dbReference type="PANTHER" id="PTHR21090:SF5">
    <property type="entry name" value="PENTAFUNCTIONAL AROM POLYPEPTIDE"/>
    <property type="match status" value="1"/>
</dbReference>
<dbReference type="Pfam" id="PF00275">
    <property type="entry name" value="EPSP_synthase"/>
    <property type="match status" value="1"/>
</dbReference>
<dbReference type="PIRSF" id="PIRSF000505">
    <property type="entry name" value="EPSPS"/>
    <property type="match status" value="1"/>
</dbReference>
<dbReference type="SUPFAM" id="SSF55205">
    <property type="entry name" value="EPT/RTPC-like"/>
    <property type="match status" value="1"/>
</dbReference>
<dbReference type="PROSITE" id="PS00104">
    <property type="entry name" value="EPSP_SYNTHASE_1"/>
    <property type="match status" value="1"/>
</dbReference>
<dbReference type="PROSITE" id="PS00885">
    <property type="entry name" value="EPSP_SYNTHASE_2"/>
    <property type="match status" value="1"/>
</dbReference>
<accession>A8Z444</accession>
<sequence>MVNEQIIDISGPLKGEIEVPGDKSMTHRAIMLASLAEGVSTIYKPLLGEDCRRTMDIFRLLGVEIKEDDEKLVVTSPGYQSFNTPHQVLYTGNSGTTTRLLAGLLSGLGIESVLSGDVSIGKRPMDRVLRPLKLMDANIEGIEDNYTPLIIKPSVIKGINYQMEVASAQVKSAILFASLFSKEPTIIKELDVSRNHTETMFKHFNIPIEAEGLSINTTPEAIRYIKPADFHVPGDISSAAFFIVAALITPGSDVTIHNVGINPTRSGIIDIVEKMGGNIQLFNQTTGAEPTASIRIQYTPMLQPITIEGELVPKAIDELPVIALLCTQAVGTSTIKDAEELKVKETNRIDTTADMLNLLGFELQPTNDGLIIHPSEFKTNATVDSLTDHRIGMMLAVASLLSSEPVKIKQFDAVNVSFPGFLPKLKLLENEG</sequence>
<proteinExistence type="inferred from homology"/>
<evidence type="ECO:0000255" key="1">
    <source>
        <dbReference type="HAMAP-Rule" id="MF_00210"/>
    </source>
</evidence>
<name>AROA_STAAT</name>
<reference key="1">
    <citation type="journal article" date="2007" name="BMC Microbiol.">
        <title>Subtle genetic changes enhance virulence of methicillin resistant and sensitive Staphylococcus aureus.</title>
        <authorList>
            <person name="Highlander S.K."/>
            <person name="Hulten K.G."/>
            <person name="Qin X."/>
            <person name="Jiang H."/>
            <person name="Yerrapragada S."/>
            <person name="Mason E.O. Jr."/>
            <person name="Shang Y."/>
            <person name="Williams T.M."/>
            <person name="Fortunov R.M."/>
            <person name="Liu Y."/>
            <person name="Igboeli O."/>
            <person name="Petrosino J."/>
            <person name="Tirumalai M."/>
            <person name="Uzman A."/>
            <person name="Fox G.E."/>
            <person name="Cardenas A.M."/>
            <person name="Muzny D.M."/>
            <person name="Hemphill L."/>
            <person name="Ding Y."/>
            <person name="Dugan S."/>
            <person name="Blyth P.R."/>
            <person name="Buhay C.J."/>
            <person name="Dinh H.H."/>
            <person name="Hawes A.C."/>
            <person name="Holder M."/>
            <person name="Kovar C.L."/>
            <person name="Lee S.L."/>
            <person name="Liu W."/>
            <person name="Nazareth L.V."/>
            <person name="Wang Q."/>
            <person name="Zhou J."/>
            <person name="Kaplan S.L."/>
            <person name="Weinstock G.M."/>
        </authorList>
    </citation>
    <scope>NUCLEOTIDE SEQUENCE [LARGE SCALE GENOMIC DNA]</scope>
    <source>
        <strain>USA300 / TCH1516</strain>
    </source>
</reference>
<keyword id="KW-0028">Amino-acid biosynthesis</keyword>
<keyword id="KW-0057">Aromatic amino acid biosynthesis</keyword>
<keyword id="KW-0963">Cytoplasm</keyword>
<keyword id="KW-0808">Transferase</keyword>